<dbReference type="EMBL" id="AC010718">
    <property type="protein sequence ID" value="AAF04446.1"/>
    <property type="molecule type" value="Genomic_DNA"/>
</dbReference>
<dbReference type="EMBL" id="CP002684">
    <property type="protein sequence ID" value="AEE35868.1"/>
    <property type="molecule type" value="Genomic_DNA"/>
</dbReference>
<dbReference type="PIR" id="F96794">
    <property type="entry name" value="F96794"/>
</dbReference>
<dbReference type="RefSeq" id="NP_177790.1">
    <property type="nucleotide sequence ID" value="NM_106314.2"/>
</dbReference>
<dbReference type="SMR" id="Q9SRE7"/>
<dbReference type="FunCoup" id="Q9SRE7">
    <property type="interactions" value="202"/>
</dbReference>
<dbReference type="STRING" id="3702.Q9SRE7"/>
<dbReference type="PaxDb" id="3702-AT1G76640.1"/>
<dbReference type="EnsemblPlants" id="AT1G76640.1">
    <property type="protein sequence ID" value="AT1G76640.1"/>
    <property type="gene ID" value="AT1G76640"/>
</dbReference>
<dbReference type="GeneID" id="843997"/>
<dbReference type="Gramene" id="AT1G76640.1">
    <property type="protein sequence ID" value="AT1G76640.1"/>
    <property type="gene ID" value="AT1G76640"/>
</dbReference>
<dbReference type="KEGG" id="ath:AT1G76640"/>
<dbReference type="Araport" id="AT1G76640"/>
<dbReference type="TAIR" id="AT1G76640">
    <property type="gene designation" value="CML39"/>
</dbReference>
<dbReference type="eggNOG" id="KOG0027">
    <property type="taxonomic scope" value="Eukaryota"/>
</dbReference>
<dbReference type="HOGENOM" id="CLU_061288_20_6_1"/>
<dbReference type="InParanoid" id="Q9SRE7"/>
<dbReference type="OMA" id="PGSLKMM"/>
<dbReference type="OrthoDB" id="26525at2759"/>
<dbReference type="PhylomeDB" id="Q9SRE7"/>
<dbReference type="PRO" id="PR:Q9SRE7"/>
<dbReference type="Proteomes" id="UP000006548">
    <property type="component" value="Chromosome 1"/>
</dbReference>
<dbReference type="ExpressionAtlas" id="Q9SRE7">
    <property type="expression patterns" value="baseline and differential"/>
</dbReference>
<dbReference type="GO" id="GO:0005737">
    <property type="term" value="C:cytoplasm"/>
    <property type="evidence" value="ECO:0000314"/>
    <property type="project" value="TAIR"/>
</dbReference>
<dbReference type="GO" id="GO:0005509">
    <property type="term" value="F:calcium ion binding"/>
    <property type="evidence" value="ECO:0000314"/>
    <property type="project" value="TAIR"/>
</dbReference>
<dbReference type="GO" id="GO:0071456">
    <property type="term" value="P:cellular response to hypoxia"/>
    <property type="evidence" value="ECO:0007007"/>
    <property type="project" value="TAIR"/>
</dbReference>
<dbReference type="CDD" id="cd00051">
    <property type="entry name" value="EFh"/>
    <property type="match status" value="1"/>
</dbReference>
<dbReference type="FunFam" id="1.10.238.10:FF:000237">
    <property type="entry name" value="Calcium-binding protein CML38"/>
    <property type="match status" value="1"/>
</dbReference>
<dbReference type="Gene3D" id="1.10.238.10">
    <property type="entry name" value="EF-hand"/>
    <property type="match status" value="2"/>
</dbReference>
<dbReference type="InterPro" id="IPR050145">
    <property type="entry name" value="Centrin_CML-like"/>
</dbReference>
<dbReference type="InterPro" id="IPR011992">
    <property type="entry name" value="EF-hand-dom_pair"/>
</dbReference>
<dbReference type="InterPro" id="IPR018247">
    <property type="entry name" value="EF_Hand_1_Ca_BS"/>
</dbReference>
<dbReference type="InterPro" id="IPR002048">
    <property type="entry name" value="EF_hand_dom"/>
</dbReference>
<dbReference type="PANTHER" id="PTHR23050">
    <property type="entry name" value="CALCIUM BINDING PROTEIN"/>
    <property type="match status" value="1"/>
</dbReference>
<dbReference type="Pfam" id="PF13499">
    <property type="entry name" value="EF-hand_7"/>
    <property type="match status" value="2"/>
</dbReference>
<dbReference type="SMART" id="SM00054">
    <property type="entry name" value="EFh"/>
    <property type="match status" value="4"/>
</dbReference>
<dbReference type="SUPFAM" id="SSF47473">
    <property type="entry name" value="EF-hand"/>
    <property type="match status" value="1"/>
</dbReference>
<dbReference type="PROSITE" id="PS00018">
    <property type="entry name" value="EF_HAND_1"/>
    <property type="match status" value="3"/>
</dbReference>
<dbReference type="PROSITE" id="PS50222">
    <property type="entry name" value="EF_HAND_2"/>
    <property type="match status" value="4"/>
</dbReference>
<organism>
    <name type="scientific">Arabidopsis thaliana</name>
    <name type="common">Mouse-ear cress</name>
    <dbReference type="NCBI Taxonomy" id="3702"/>
    <lineage>
        <taxon>Eukaryota</taxon>
        <taxon>Viridiplantae</taxon>
        <taxon>Streptophyta</taxon>
        <taxon>Embryophyta</taxon>
        <taxon>Tracheophyta</taxon>
        <taxon>Spermatophyta</taxon>
        <taxon>Magnoliopsida</taxon>
        <taxon>eudicotyledons</taxon>
        <taxon>Gunneridae</taxon>
        <taxon>Pentapetalae</taxon>
        <taxon>rosids</taxon>
        <taxon>malvids</taxon>
        <taxon>Brassicales</taxon>
        <taxon>Brassicaceae</taxon>
        <taxon>Camelineae</taxon>
        <taxon>Arabidopsis</taxon>
    </lineage>
</organism>
<feature type="chain" id="PRO_0000342963" description="Calcium-binding protein CML39">
    <location>
        <begin position="1"/>
        <end position="159"/>
    </location>
</feature>
<feature type="domain" description="EF-hand 1" evidence="1">
    <location>
        <begin position="18"/>
        <end position="53"/>
    </location>
</feature>
<feature type="domain" description="EF-hand 2" evidence="1">
    <location>
        <begin position="54"/>
        <end position="89"/>
    </location>
</feature>
<feature type="domain" description="EF-hand 3" evidence="1">
    <location>
        <begin position="93"/>
        <end position="128"/>
    </location>
</feature>
<feature type="domain" description="EF-hand 4" evidence="1">
    <location>
        <begin position="129"/>
        <end position="159"/>
    </location>
</feature>
<feature type="binding site" evidence="1">
    <location>
        <position position="31"/>
    </location>
    <ligand>
        <name>Ca(2+)</name>
        <dbReference type="ChEBI" id="CHEBI:29108"/>
        <label>1</label>
    </ligand>
</feature>
<feature type="binding site" evidence="1">
    <location>
        <position position="33"/>
    </location>
    <ligand>
        <name>Ca(2+)</name>
        <dbReference type="ChEBI" id="CHEBI:29108"/>
        <label>1</label>
    </ligand>
</feature>
<feature type="binding site" evidence="1">
    <location>
        <position position="35"/>
    </location>
    <ligand>
        <name>Ca(2+)</name>
        <dbReference type="ChEBI" id="CHEBI:29108"/>
        <label>1</label>
    </ligand>
</feature>
<feature type="binding site" evidence="1">
    <location>
        <position position="37"/>
    </location>
    <ligand>
        <name>Ca(2+)</name>
        <dbReference type="ChEBI" id="CHEBI:29108"/>
        <label>1</label>
    </ligand>
</feature>
<feature type="binding site" evidence="1">
    <location>
        <position position="42"/>
    </location>
    <ligand>
        <name>Ca(2+)</name>
        <dbReference type="ChEBI" id="CHEBI:29108"/>
        <label>1</label>
    </ligand>
</feature>
<feature type="binding site" evidence="1">
    <location>
        <position position="67"/>
    </location>
    <ligand>
        <name>Ca(2+)</name>
        <dbReference type="ChEBI" id="CHEBI:29108"/>
        <label>2</label>
    </ligand>
</feature>
<feature type="binding site" evidence="1">
    <location>
        <position position="69"/>
    </location>
    <ligand>
        <name>Ca(2+)</name>
        <dbReference type="ChEBI" id="CHEBI:29108"/>
        <label>2</label>
    </ligand>
</feature>
<feature type="binding site" evidence="1">
    <location>
        <position position="71"/>
    </location>
    <ligand>
        <name>Ca(2+)</name>
        <dbReference type="ChEBI" id="CHEBI:29108"/>
        <label>2</label>
    </ligand>
</feature>
<feature type="binding site" evidence="1">
    <location>
        <position position="73"/>
    </location>
    <ligand>
        <name>Ca(2+)</name>
        <dbReference type="ChEBI" id="CHEBI:29108"/>
        <label>2</label>
    </ligand>
</feature>
<feature type="binding site" evidence="1">
    <location>
        <position position="78"/>
    </location>
    <ligand>
        <name>Ca(2+)</name>
        <dbReference type="ChEBI" id="CHEBI:29108"/>
        <label>2</label>
    </ligand>
</feature>
<feature type="binding site" evidence="1">
    <location>
        <position position="142"/>
    </location>
    <ligand>
        <name>Ca(2+)</name>
        <dbReference type="ChEBI" id="CHEBI:29108"/>
        <label>3</label>
    </ligand>
</feature>
<feature type="binding site" evidence="1">
    <location>
        <position position="144"/>
    </location>
    <ligand>
        <name>Ca(2+)</name>
        <dbReference type="ChEBI" id="CHEBI:29108"/>
        <label>3</label>
    </ligand>
</feature>
<feature type="binding site" evidence="1">
    <location>
        <position position="146"/>
    </location>
    <ligand>
        <name>Ca(2+)</name>
        <dbReference type="ChEBI" id="CHEBI:29108"/>
        <label>3</label>
    </ligand>
</feature>
<feature type="binding site" evidence="1">
    <location>
        <position position="153"/>
    </location>
    <ligand>
        <name>Ca(2+)</name>
        <dbReference type="ChEBI" id="CHEBI:29108"/>
        <label>3</label>
    </ligand>
</feature>
<protein>
    <recommendedName>
        <fullName>Calcium-binding protein CML39</fullName>
    </recommendedName>
    <alternativeName>
        <fullName>Calmodulin-like protein 39</fullName>
    </alternativeName>
</protein>
<keyword id="KW-0106">Calcium</keyword>
<keyword id="KW-0479">Metal-binding</keyword>
<keyword id="KW-1185">Reference proteome</keyword>
<keyword id="KW-0677">Repeat</keyword>
<name>CML39_ARATH</name>
<sequence length="159" mass="18146">MKNTQRQLSSSFMKFLEEKNRDLEAVFAYMDANRDGRISAEELKKSFKTLGEQMSDEEAEAAVKLSDIDGDGMLDINEFALLIKGNDEFTEEEKKRKIMEAFRMYIADGEDCITPGSLKMMLMKLGESRTTDDCKVMIQAFDLNADGVLSFDEFALMMR</sequence>
<accession>Q9SRE7</accession>
<proteinExistence type="evidence at transcript level"/>
<comment type="function">
    <text evidence="2">Potential calcium sensor that binds calcium in vitro.</text>
</comment>
<comment type="tissue specificity">
    <text evidence="2">Expressed in the zones of elongation and differentiation in seedling roots and at the root-hypocotyl junction. Expressed from stage 12 of flower development in anthers, specifically in pollen.</text>
</comment>
<comment type="induction">
    <text evidence="2">By salt and methyl jasmonate treatments, drought stress and infection by the bacterial pathogen P.syringae.</text>
</comment>
<comment type="caution">
    <text evidence="3">Although assigned as a calmodulin family member by Ref.3, it only contains EF-hand domains.</text>
</comment>
<gene>
    <name type="primary">CML39</name>
    <name type="ordered locus">At1g76640</name>
    <name type="ORF">F28O16.1</name>
</gene>
<evidence type="ECO:0000255" key="1">
    <source>
        <dbReference type="PROSITE-ProRule" id="PRU00448"/>
    </source>
</evidence>
<evidence type="ECO:0000269" key="2">
    <source>
    </source>
</evidence>
<evidence type="ECO:0000305" key="3"/>
<reference key="1">
    <citation type="journal article" date="2000" name="Nature">
        <title>Sequence and analysis of chromosome 1 of the plant Arabidopsis thaliana.</title>
        <authorList>
            <person name="Theologis A."/>
            <person name="Ecker J.R."/>
            <person name="Palm C.J."/>
            <person name="Federspiel N.A."/>
            <person name="Kaul S."/>
            <person name="White O."/>
            <person name="Alonso J."/>
            <person name="Altafi H."/>
            <person name="Araujo R."/>
            <person name="Bowman C.L."/>
            <person name="Brooks S.Y."/>
            <person name="Buehler E."/>
            <person name="Chan A."/>
            <person name="Chao Q."/>
            <person name="Chen H."/>
            <person name="Cheuk R.F."/>
            <person name="Chin C.W."/>
            <person name="Chung M.K."/>
            <person name="Conn L."/>
            <person name="Conway A.B."/>
            <person name="Conway A.R."/>
            <person name="Creasy T.H."/>
            <person name="Dewar K."/>
            <person name="Dunn P."/>
            <person name="Etgu P."/>
            <person name="Feldblyum T.V."/>
            <person name="Feng J.-D."/>
            <person name="Fong B."/>
            <person name="Fujii C.Y."/>
            <person name="Gill J.E."/>
            <person name="Goldsmith A.D."/>
            <person name="Haas B."/>
            <person name="Hansen N.F."/>
            <person name="Hughes B."/>
            <person name="Huizar L."/>
            <person name="Hunter J.L."/>
            <person name="Jenkins J."/>
            <person name="Johnson-Hopson C."/>
            <person name="Khan S."/>
            <person name="Khaykin E."/>
            <person name="Kim C.J."/>
            <person name="Koo H.L."/>
            <person name="Kremenetskaia I."/>
            <person name="Kurtz D.B."/>
            <person name="Kwan A."/>
            <person name="Lam B."/>
            <person name="Langin-Hooper S."/>
            <person name="Lee A."/>
            <person name="Lee J.M."/>
            <person name="Lenz C.A."/>
            <person name="Li J.H."/>
            <person name="Li Y.-P."/>
            <person name="Lin X."/>
            <person name="Liu S.X."/>
            <person name="Liu Z.A."/>
            <person name="Luros J.S."/>
            <person name="Maiti R."/>
            <person name="Marziali A."/>
            <person name="Militscher J."/>
            <person name="Miranda M."/>
            <person name="Nguyen M."/>
            <person name="Nierman W.C."/>
            <person name="Osborne B.I."/>
            <person name="Pai G."/>
            <person name="Peterson J."/>
            <person name="Pham P.K."/>
            <person name="Rizzo M."/>
            <person name="Rooney T."/>
            <person name="Rowley D."/>
            <person name="Sakano H."/>
            <person name="Salzberg S.L."/>
            <person name="Schwartz J.R."/>
            <person name="Shinn P."/>
            <person name="Southwick A.M."/>
            <person name="Sun H."/>
            <person name="Tallon L.J."/>
            <person name="Tambunga G."/>
            <person name="Toriumi M.J."/>
            <person name="Town C.D."/>
            <person name="Utterback T."/>
            <person name="Van Aken S."/>
            <person name="Vaysberg M."/>
            <person name="Vysotskaia V.S."/>
            <person name="Walker M."/>
            <person name="Wu D."/>
            <person name="Yu G."/>
            <person name="Fraser C.M."/>
            <person name="Venter J.C."/>
            <person name="Davis R.W."/>
        </authorList>
    </citation>
    <scope>NUCLEOTIDE SEQUENCE [LARGE SCALE GENOMIC DNA]</scope>
    <source>
        <strain>cv. Columbia</strain>
    </source>
</reference>
<reference key="2">
    <citation type="journal article" date="2017" name="Plant J.">
        <title>Araport11: a complete reannotation of the Arabidopsis thaliana reference genome.</title>
        <authorList>
            <person name="Cheng C.Y."/>
            <person name="Krishnakumar V."/>
            <person name="Chan A.P."/>
            <person name="Thibaud-Nissen F."/>
            <person name="Schobel S."/>
            <person name="Town C.D."/>
        </authorList>
    </citation>
    <scope>GENOME REANNOTATION</scope>
    <source>
        <strain>cv. Columbia</strain>
    </source>
</reference>
<reference key="3">
    <citation type="journal article" date="2003" name="New Phytol.">
        <title>Calmodulins and related potential calcium sensors of Arabidopsis.</title>
        <authorList>
            <person name="McCormack E."/>
            <person name="Braam J."/>
        </authorList>
    </citation>
    <scope>GENE FAMILY</scope>
    <scope>NOMENCLATURE</scope>
</reference>
<reference key="4">
    <citation type="journal article" date="2007" name="Plant Mol. Biol.">
        <title>Developmental and stimulus-induced expression patterns of Arabidopsis calmodulin-like genes CML37, CML38 and CML39.</title>
        <authorList>
            <person name="Vanderbeld B."/>
            <person name="Snedden W.A."/>
        </authorList>
    </citation>
    <scope>FUNCTION</scope>
    <scope>TISSUE SPECIFICITY</scope>
    <scope>INDUCTION</scope>
</reference>